<comment type="function">
    <text evidence="1">The phosphoenolpyruvate-dependent sugar phosphotransferase system (sugar PTS), a major carbohydrate active -transport system, catalyzes the phosphorylation of incoming sugar substrates concomitantly with their translocation across the cell membrane. This system is involved in alpha- and beta-glucoside transport (By similarity).</text>
</comment>
<comment type="subcellular location">
    <subcellularLocation>
        <location evidence="4">Cell membrane</location>
        <topology evidence="4">Multi-pass membrane protein</topology>
    </subcellularLocation>
</comment>
<comment type="domain">
    <text>The EIIC domain forms the PTS system translocation channel and contains the specific substrate-binding site.</text>
</comment>
<comment type="domain">
    <text>The EIIB domain is phosphorylated by phospho-EIIA on a cysteinyl or histidyl residue, depending on the transported sugar. Then, it transfers the phosphoryl group to the sugar substrate concomitantly with the sugar uptake processed by the EIIC domain.</text>
</comment>
<comment type="domain">
    <text>The EIIA domain is phosphorylated by phospho-HPr on a histidyl residue. Then, it transfers the phosphoryl group to the EIIB domain.</text>
</comment>
<name>PTU3C_STAA3</name>
<evidence type="ECO:0000250" key="1"/>
<evidence type="ECO:0000255" key="2">
    <source>
        <dbReference type="PROSITE-ProRule" id="PRU00416"/>
    </source>
</evidence>
<evidence type="ECO:0000255" key="3">
    <source>
        <dbReference type="PROSITE-ProRule" id="PRU00421"/>
    </source>
</evidence>
<evidence type="ECO:0000255" key="4">
    <source>
        <dbReference type="PROSITE-ProRule" id="PRU00426"/>
    </source>
</evidence>
<accession>Q2FDW8</accession>
<feature type="chain" id="PRO_0000351408" description="PTS system glucoside-specific EIICBA component">
    <location>
        <begin position="1"/>
        <end position="688"/>
    </location>
</feature>
<feature type="transmembrane region" description="Helical" evidence="4">
    <location>
        <begin position="12"/>
        <end position="32"/>
    </location>
</feature>
<feature type="transmembrane region" description="Helical" evidence="4">
    <location>
        <begin position="81"/>
        <end position="101"/>
    </location>
</feature>
<feature type="transmembrane region" description="Helical" evidence="4">
    <location>
        <begin position="137"/>
        <end position="157"/>
    </location>
</feature>
<feature type="transmembrane region" description="Helical" evidence="4">
    <location>
        <begin position="182"/>
        <end position="202"/>
    </location>
</feature>
<feature type="transmembrane region" description="Helical" evidence="4">
    <location>
        <begin position="223"/>
        <end position="243"/>
    </location>
</feature>
<feature type="transmembrane region" description="Helical" evidence="4">
    <location>
        <begin position="284"/>
        <end position="304"/>
    </location>
</feature>
<feature type="transmembrane region" description="Helical" evidence="4">
    <location>
        <begin position="315"/>
        <end position="335"/>
    </location>
</feature>
<feature type="transmembrane region" description="Helical" evidence="4">
    <location>
        <begin position="340"/>
        <end position="360"/>
    </location>
</feature>
<feature type="transmembrane region" description="Helical" evidence="4">
    <location>
        <begin position="364"/>
        <end position="384"/>
    </location>
</feature>
<feature type="transmembrane region" description="Helical" evidence="4">
    <location>
        <begin position="395"/>
        <end position="415"/>
    </location>
</feature>
<feature type="domain" description="PTS EIIC type-1" evidence="4">
    <location>
        <begin position="3"/>
        <end position="427"/>
    </location>
</feature>
<feature type="domain" description="PTS EIIB type-1" evidence="3">
    <location>
        <begin position="438"/>
        <end position="519"/>
    </location>
</feature>
<feature type="domain" description="PTS EIIA type-1" evidence="2">
    <location>
        <begin position="560"/>
        <end position="664"/>
    </location>
</feature>
<feature type="active site" description="Phosphocysteine intermediate; for EIIB activity" evidence="3">
    <location>
        <position position="460"/>
    </location>
</feature>
<feature type="active site" description="Tele-phosphohistidine intermediate; for EIIA activity" evidence="2">
    <location>
        <position position="612"/>
    </location>
</feature>
<proteinExistence type="inferred from homology"/>
<sequence length="688" mass="74416">MFKKLFGQLQRIGKALMLPVAILPAAGILLAFGNAMHNEQLVEIAPWLKNDIIVMISSVMEAAGQVVFDNLPLLFAVGTALGLAGGDGVAALAALVGYLIMNATMGKVLHITIDDIFSYAKGAKELSQAAKEPAHALVLGIPTLQTGVFGGIIMGALAAWCYNKFYNITLPPFLGFFAGKRFVPIVTSVVAIATGVLLSFAWPPIQDGLNSLSNFLLNKNLTLTTFIFGIIERSLIPFGLHHIFYSPFWFEFGSYTNHAGELVRGDQRIWMAQLKDGVPFTAGAFTTGKYPFMMFGLPAAAFAIYKNARPERKKVVGGLMLSAGLTAFLTGITEPLEFSFLFVAPVLYGIHVLLAGTSFLVMHLLGVKIGMTFSGGFIDYILYGLLNWDRSHALLVIPVGIVYAIVYYFLFDFAIRKFKLKTPGREDEETEIRNSSVAKLPFDVLDAMGGKENIKHLDACITRLRVEVVDKSKVDVAGIKALGASGVLEVGNNMQAIFGPKSDQIKHDMAKIMSGEITKPSETTVTEEMSDEPVHVEALGTTDIYAPGIGQIIPLSEVPDQVFAGKMMGDGVGFIPEKGEIVAPFDGTVKTIFPTKHAIGLESESGVEVLIHIGIDTVKLNGEGFESLINVDEKVTQGQPLMKVNLAYLKAHAPSIVTPMIITNLENKELVIEDVQDADPGKLIMTVK</sequence>
<protein>
    <recommendedName>
        <fullName>PTS system glucoside-specific EIICBA component</fullName>
    </recommendedName>
    <domain>
        <recommendedName>
            <fullName>Glucoside permease IIC component</fullName>
        </recommendedName>
        <alternativeName>
            <fullName>PTS system glucoside-specific EIIC component</fullName>
        </alternativeName>
    </domain>
    <domain>
        <recommendedName>
            <fullName>Glucoside-specific phosphotransferase enzyme IIB component</fullName>
            <ecNumber>2.7.1.-</ecNumber>
        </recommendedName>
        <alternativeName>
            <fullName>PTS system glucoside-specific EIIB component</fullName>
        </alternativeName>
    </domain>
    <domain>
        <recommendedName>
            <fullName>Glucoside-specific phosphotransferase enzyme IIA component</fullName>
        </recommendedName>
        <alternativeName>
            <fullName>PTS system glucoside-specific EIIA component</fullName>
        </alternativeName>
    </domain>
</protein>
<reference key="1">
    <citation type="journal article" date="2006" name="Lancet">
        <title>Complete genome sequence of USA300, an epidemic clone of community-acquired meticillin-resistant Staphylococcus aureus.</title>
        <authorList>
            <person name="Diep B.A."/>
            <person name="Gill S.R."/>
            <person name="Chang R.F."/>
            <person name="Phan T.H."/>
            <person name="Chen J.H."/>
            <person name="Davidson M.G."/>
            <person name="Lin F."/>
            <person name="Lin J."/>
            <person name="Carleton H.A."/>
            <person name="Mongodin E.F."/>
            <person name="Sensabaugh G.F."/>
            <person name="Perdreau-Remington F."/>
        </authorList>
    </citation>
    <scope>NUCLEOTIDE SEQUENCE [LARGE SCALE GENOMIC DNA]</scope>
    <source>
        <strain>USA300</strain>
    </source>
</reference>
<keyword id="KW-1003">Cell membrane</keyword>
<keyword id="KW-0418">Kinase</keyword>
<keyword id="KW-0472">Membrane</keyword>
<keyword id="KW-0598">Phosphotransferase system</keyword>
<keyword id="KW-0762">Sugar transport</keyword>
<keyword id="KW-0808">Transferase</keyword>
<keyword id="KW-0812">Transmembrane</keyword>
<keyword id="KW-1133">Transmembrane helix</keyword>
<keyword id="KW-0813">Transport</keyword>
<organism>
    <name type="scientific">Staphylococcus aureus (strain USA300)</name>
    <dbReference type="NCBI Taxonomy" id="367830"/>
    <lineage>
        <taxon>Bacteria</taxon>
        <taxon>Bacillati</taxon>
        <taxon>Bacillota</taxon>
        <taxon>Bacilli</taxon>
        <taxon>Bacillales</taxon>
        <taxon>Staphylococcaceae</taxon>
        <taxon>Staphylococcus</taxon>
    </lineage>
</organism>
<dbReference type="EC" id="2.7.1.-"/>
<dbReference type="EMBL" id="CP000255">
    <property type="protein sequence ID" value="ABD21359.1"/>
    <property type="molecule type" value="Genomic_DNA"/>
</dbReference>
<dbReference type="SMR" id="Q2FDW8"/>
<dbReference type="KEGG" id="saa:SAUSA300_2476"/>
<dbReference type="HOGENOM" id="CLU_012312_1_1_9"/>
<dbReference type="Proteomes" id="UP000001939">
    <property type="component" value="Chromosome"/>
</dbReference>
<dbReference type="GO" id="GO:0005886">
    <property type="term" value="C:plasma membrane"/>
    <property type="evidence" value="ECO:0007669"/>
    <property type="project" value="UniProtKB-SubCell"/>
</dbReference>
<dbReference type="GO" id="GO:0055056">
    <property type="term" value="F:D-glucose transmembrane transporter activity"/>
    <property type="evidence" value="ECO:0007669"/>
    <property type="project" value="InterPro"/>
</dbReference>
<dbReference type="GO" id="GO:0016301">
    <property type="term" value="F:kinase activity"/>
    <property type="evidence" value="ECO:0007669"/>
    <property type="project" value="UniProtKB-KW"/>
</dbReference>
<dbReference type="GO" id="GO:0008982">
    <property type="term" value="F:protein-N(PI)-phosphohistidine-sugar phosphotransferase activity"/>
    <property type="evidence" value="ECO:0007669"/>
    <property type="project" value="InterPro"/>
</dbReference>
<dbReference type="GO" id="GO:0090563">
    <property type="term" value="F:protein-phosphocysteine-sugar phosphotransferase activity"/>
    <property type="evidence" value="ECO:0007669"/>
    <property type="project" value="TreeGrafter"/>
</dbReference>
<dbReference type="GO" id="GO:1904659">
    <property type="term" value="P:D-glucose transmembrane transport"/>
    <property type="evidence" value="ECO:0007669"/>
    <property type="project" value="InterPro"/>
</dbReference>
<dbReference type="GO" id="GO:0009401">
    <property type="term" value="P:phosphoenolpyruvate-dependent sugar phosphotransferase system"/>
    <property type="evidence" value="ECO:0007669"/>
    <property type="project" value="UniProtKB-KW"/>
</dbReference>
<dbReference type="CDD" id="cd00212">
    <property type="entry name" value="PTS_IIB_glc"/>
    <property type="match status" value="1"/>
</dbReference>
<dbReference type="FunFam" id="2.70.70.10:FF:000001">
    <property type="entry name" value="PTS system glucose-specific IIA component"/>
    <property type="match status" value="1"/>
</dbReference>
<dbReference type="FunFam" id="3.30.1360.60:FF:000001">
    <property type="entry name" value="PTS system glucose-specific IIBC component PtsG"/>
    <property type="match status" value="1"/>
</dbReference>
<dbReference type="Gene3D" id="2.70.70.10">
    <property type="entry name" value="Glucose Permease (Domain IIA)"/>
    <property type="match status" value="1"/>
</dbReference>
<dbReference type="Gene3D" id="3.30.1360.60">
    <property type="entry name" value="Glucose permease domain IIB"/>
    <property type="match status" value="1"/>
</dbReference>
<dbReference type="InterPro" id="IPR011055">
    <property type="entry name" value="Dup_hybrid_motif"/>
</dbReference>
<dbReference type="InterPro" id="IPR036878">
    <property type="entry name" value="Glu_permease_IIB"/>
</dbReference>
<dbReference type="InterPro" id="IPR018113">
    <property type="entry name" value="PTrfase_EIIB_Cys"/>
</dbReference>
<dbReference type="InterPro" id="IPR001127">
    <property type="entry name" value="PTS_EIIA_1_perm"/>
</dbReference>
<dbReference type="InterPro" id="IPR003352">
    <property type="entry name" value="PTS_EIIC"/>
</dbReference>
<dbReference type="InterPro" id="IPR013013">
    <property type="entry name" value="PTS_EIIC_1"/>
</dbReference>
<dbReference type="InterPro" id="IPR050429">
    <property type="entry name" value="PTS_Glucose_EIICBA"/>
</dbReference>
<dbReference type="InterPro" id="IPR001996">
    <property type="entry name" value="PTS_IIB_1"/>
</dbReference>
<dbReference type="InterPro" id="IPR011299">
    <property type="entry name" value="PTS_IIBC_glc"/>
</dbReference>
<dbReference type="NCBIfam" id="TIGR00826">
    <property type="entry name" value="EIIB_glc"/>
    <property type="match status" value="1"/>
</dbReference>
<dbReference type="NCBIfam" id="TIGR00830">
    <property type="entry name" value="PTBA"/>
    <property type="match status" value="1"/>
</dbReference>
<dbReference type="NCBIfam" id="TIGR02002">
    <property type="entry name" value="PTS-II-BC-glcB"/>
    <property type="match status" value="1"/>
</dbReference>
<dbReference type="PANTHER" id="PTHR30009">
    <property type="entry name" value="CYTOCHROME C-TYPE SYNTHESIS PROTEIN AND PTS TRANSMEMBRANE COMPONENT"/>
    <property type="match status" value="1"/>
</dbReference>
<dbReference type="PANTHER" id="PTHR30009:SF20">
    <property type="entry name" value="PTS SYSTEM GLUCOSE-SPECIFIC EIICB COMPONENT-RELATED"/>
    <property type="match status" value="1"/>
</dbReference>
<dbReference type="Pfam" id="PF00358">
    <property type="entry name" value="PTS_EIIA_1"/>
    <property type="match status" value="1"/>
</dbReference>
<dbReference type="Pfam" id="PF00367">
    <property type="entry name" value="PTS_EIIB"/>
    <property type="match status" value="1"/>
</dbReference>
<dbReference type="Pfam" id="PF02378">
    <property type="entry name" value="PTS_EIIC"/>
    <property type="match status" value="1"/>
</dbReference>
<dbReference type="SUPFAM" id="SSF51261">
    <property type="entry name" value="Duplicated hybrid motif"/>
    <property type="match status" value="1"/>
</dbReference>
<dbReference type="SUPFAM" id="SSF55604">
    <property type="entry name" value="Glucose permease domain IIB"/>
    <property type="match status" value="1"/>
</dbReference>
<dbReference type="PROSITE" id="PS51093">
    <property type="entry name" value="PTS_EIIA_TYPE_1"/>
    <property type="match status" value="1"/>
</dbReference>
<dbReference type="PROSITE" id="PS00371">
    <property type="entry name" value="PTS_EIIA_TYPE_1_HIS"/>
    <property type="match status" value="1"/>
</dbReference>
<dbReference type="PROSITE" id="PS51098">
    <property type="entry name" value="PTS_EIIB_TYPE_1"/>
    <property type="match status" value="1"/>
</dbReference>
<dbReference type="PROSITE" id="PS01035">
    <property type="entry name" value="PTS_EIIB_TYPE_1_CYS"/>
    <property type="match status" value="1"/>
</dbReference>
<dbReference type="PROSITE" id="PS51103">
    <property type="entry name" value="PTS_EIIC_TYPE_1"/>
    <property type="match status" value="1"/>
</dbReference>
<gene>
    <name type="primary">glcB</name>
    <name type="ordered locus">SAUSA300_2476</name>
</gene>